<dbReference type="EC" id="2.7.7.4" evidence="2"/>
<dbReference type="EMBL" id="CP000627">
    <property type="protein sequence ID" value="ABQ19911.1"/>
    <property type="molecule type" value="Genomic_DNA"/>
</dbReference>
<dbReference type="EMBL" id="CP001235">
    <property type="protein sequence ID" value="ACP10657.1"/>
    <property type="molecule type" value="Genomic_DNA"/>
</dbReference>
<dbReference type="RefSeq" id="WP_001057922.1">
    <property type="nucleotide sequence ID" value="NC_012582.1"/>
</dbReference>
<dbReference type="RefSeq" id="WP_001057925.1">
    <property type="nucleotide sequence ID" value="NZ_JAACZH010000021.1"/>
</dbReference>
<dbReference type="SMR" id="A5F578"/>
<dbReference type="GeneID" id="69718837"/>
<dbReference type="KEGG" id="vco:VC0395_A2136"/>
<dbReference type="KEGG" id="vcr:VC395_2671"/>
<dbReference type="PATRIC" id="fig|345073.21.peg.2570"/>
<dbReference type="eggNOG" id="COG2895">
    <property type="taxonomic scope" value="Bacteria"/>
</dbReference>
<dbReference type="HOGENOM" id="CLU_007265_5_2_6"/>
<dbReference type="OrthoDB" id="9804504at2"/>
<dbReference type="UniPathway" id="UPA00140">
    <property type="reaction ID" value="UER00204"/>
</dbReference>
<dbReference type="Proteomes" id="UP000000249">
    <property type="component" value="Chromosome 2"/>
</dbReference>
<dbReference type="GO" id="GO:0005524">
    <property type="term" value="F:ATP binding"/>
    <property type="evidence" value="ECO:0007669"/>
    <property type="project" value="UniProtKB-KW"/>
</dbReference>
<dbReference type="GO" id="GO:0005525">
    <property type="term" value="F:GTP binding"/>
    <property type="evidence" value="ECO:0007669"/>
    <property type="project" value="UniProtKB-UniRule"/>
</dbReference>
<dbReference type="GO" id="GO:0003924">
    <property type="term" value="F:GTPase activity"/>
    <property type="evidence" value="ECO:0007669"/>
    <property type="project" value="InterPro"/>
</dbReference>
<dbReference type="GO" id="GO:0097216">
    <property type="term" value="F:guanosine tetraphosphate binding"/>
    <property type="evidence" value="ECO:0007669"/>
    <property type="project" value="UniProtKB-ARBA"/>
</dbReference>
<dbReference type="GO" id="GO:0004781">
    <property type="term" value="F:sulfate adenylyltransferase (ATP) activity"/>
    <property type="evidence" value="ECO:0007669"/>
    <property type="project" value="UniProtKB-UniRule"/>
</dbReference>
<dbReference type="GO" id="GO:0070814">
    <property type="term" value="P:hydrogen sulfide biosynthetic process"/>
    <property type="evidence" value="ECO:0007669"/>
    <property type="project" value="UniProtKB-UniRule"/>
</dbReference>
<dbReference type="GO" id="GO:0000103">
    <property type="term" value="P:sulfate assimilation"/>
    <property type="evidence" value="ECO:0007669"/>
    <property type="project" value="UniProtKB-UniRule"/>
</dbReference>
<dbReference type="CDD" id="cd04166">
    <property type="entry name" value="CysN_ATPS"/>
    <property type="match status" value="1"/>
</dbReference>
<dbReference type="CDD" id="cd03695">
    <property type="entry name" value="CysN_NodQ_II"/>
    <property type="match status" value="1"/>
</dbReference>
<dbReference type="CDD" id="cd04095">
    <property type="entry name" value="CysN_NoDQ_III"/>
    <property type="match status" value="1"/>
</dbReference>
<dbReference type="FunFam" id="2.40.30.10:FF:000027">
    <property type="entry name" value="Sulfate adenylyltransferase subunit 1"/>
    <property type="match status" value="1"/>
</dbReference>
<dbReference type="FunFam" id="2.40.30.10:FF:000031">
    <property type="entry name" value="Sulfate adenylyltransferase subunit 1"/>
    <property type="match status" value="1"/>
</dbReference>
<dbReference type="FunFam" id="3.40.50.300:FF:000119">
    <property type="entry name" value="Sulfate adenylyltransferase subunit 1"/>
    <property type="match status" value="1"/>
</dbReference>
<dbReference type="Gene3D" id="3.40.50.300">
    <property type="entry name" value="P-loop containing nucleotide triphosphate hydrolases"/>
    <property type="match status" value="1"/>
</dbReference>
<dbReference type="Gene3D" id="2.40.30.10">
    <property type="entry name" value="Translation factors"/>
    <property type="match status" value="2"/>
</dbReference>
<dbReference type="HAMAP" id="MF_00062">
    <property type="entry name" value="Sulf_adenylyltr_sub1"/>
    <property type="match status" value="1"/>
</dbReference>
<dbReference type="InterPro" id="IPR041757">
    <property type="entry name" value="CysN_GTP-bd"/>
</dbReference>
<dbReference type="InterPro" id="IPR044138">
    <property type="entry name" value="CysN_II"/>
</dbReference>
<dbReference type="InterPro" id="IPR044139">
    <property type="entry name" value="CysN_NoDQ_III"/>
</dbReference>
<dbReference type="InterPro" id="IPR004161">
    <property type="entry name" value="EFTu-like_2"/>
</dbReference>
<dbReference type="InterPro" id="IPR031157">
    <property type="entry name" value="G_TR_CS"/>
</dbReference>
<dbReference type="InterPro" id="IPR054696">
    <property type="entry name" value="GTP-eEF1A_C"/>
</dbReference>
<dbReference type="InterPro" id="IPR027417">
    <property type="entry name" value="P-loop_NTPase"/>
</dbReference>
<dbReference type="InterPro" id="IPR005225">
    <property type="entry name" value="Small_GTP-bd"/>
</dbReference>
<dbReference type="InterPro" id="IPR011779">
    <property type="entry name" value="SO4_adenylTrfase_lsu"/>
</dbReference>
<dbReference type="InterPro" id="IPR000795">
    <property type="entry name" value="T_Tr_GTP-bd_dom"/>
</dbReference>
<dbReference type="InterPro" id="IPR050100">
    <property type="entry name" value="TRAFAC_GTPase_members"/>
</dbReference>
<dbReference type="InterPro" id="IPR009000">
    <property type="entry name" value="Transl_B-barrel_sf"/>
</dbReference>
<dbReference type="InterPro" id="IPR009001">
    <property type="entry name" value="Transl_elong_EF1A/Init_IF2_C"/>
</dbReference>
<dbReference type="NCBIfam" id="TIGR02034">
    <property type="entry name" value="CysN"/>
    <property type="match status" value="1"/>
</dbReference>
<dbReference type="NCBIfam" id="NF003478">
    <property type="entry name" value="PRK05124.1"/>
    <property type="match status" value="1"/>
</dbReference>
<dbReference type="NCBIfam" id="TIGR00231">
    <property type="entry name" value="small_GTP"/>
    <property type="match status" value="1"/>
</dbReference>
<dbReference type="PANTHER" id="PTHR23115">
    <property type="entry name" value="TRANSLATION FACTOR"/>
    <property type="match status" value="1"/>
</dbReference>
<dbReference type="Pfam" id="PF22594">
    <property type="entry name" value="GTP-eEF1A_C"/>
    <property type="match status" value="1"/>
</dbReference>
<dbReference type="Pfam" id="PF00009">
    <property type="entry name" value="GTP_EFTU"/>
    <property type="match status" value="1"/>
</dbReference>
<dbReference type="Pfam" id="PF03144">
    <property type="entry name" value="GTP_EFTU_D2"/>
    <property type="match status" value="1"/>
</dbReference>
<dbReference type="PRINTS" id="PR00315">
    <property type="entry name" value="ELONGATNFCT"/>
</dbReference>
<dbReference type="SUPFAM" id="SSF50465">
    <property type="entry name" value="EF-Tu/eEF-1alpha/eIF2-gamma C-terminal domain"/>
    <property type="match status" value="1"/>
</dbReference>
<dbReference type="SUPFAM" id="SSF52540">
    <property type="entry name" value="P-loop containing nucleoside triphosphate hydrolases"/>
    <property type="match status" value="1"/>
</dbReference>
<dbReference type="SUPFAM" id="SSF50447">
    <property type="entry name" value="Translation proteins"/>
    <property type="match status" value="1"/>
</dbReference>
<dbReference type="PROSITE" id="PS00301">
    <property type="entry name" value="G_TR_1"/>
    <property type="match status" value="1"/>
</dbReference>
<dbReference type="PROSITE" id="PS51722">
    <property type="entry name" value="G_TR_2"/>
    <property type="match status" value="1"/>
</dbReference>
<comment type="function">
    <text evidence="2">With CysD forms the ATP sulfurylase (ATPS) that catalyzes the adenylation of sulfate producing adenosine 5'-phosphosulfate (APS) and diphosphate, the first enzymatic step in sulfur assimilation pathway. APS synthesis involves the formation of a high-energy phosphoric-sulfuric acid anhydride bond driven by GTP hydrolysis by CysN coupled to ATP hydrolysis by CysD.</text>
</comment>
<comment type="catalytic activity">
    <reaction evidence="2">
        <text>sulfate + ATP + H(+) = adenosine 5'-phosphosulfate + diphosphate</text>
        <dbReference type="Rhea" id="RHEA:18133"/>
        <dbReference type="ChEBI" id="CHEBI:15378"/>
        <dbReference type="ChEBI" id="CHEBI:16189"/>
        <dbReference type="ChEBI" id="CHEBI:30616"/>
        <dbReference type="ChEBI" id="CHEBI:33019"/>
        <dbReference type="ChEBI" id="CHEBI:58243"/>
        <dbReference type="EC" id="2.7.7.4"/>
    </reaction>
</comment>
<comment type="pathway">
    <text evidence="2">Sulfur metabolism; hydrogen sulfide biosynthesis; sulfite from sulfate: step 1/3.</text>
</comment>
<comment type="subunit">
    <text evidence="2">Heterodimer composed of CysD, the smaller subunit, and CysN.</text>
</comment>
<comment type="similarity">
    <text evidence="2">Belongs to the TRAFAC class translation factor GTPase superfamily. Classic translation factor GTPase family. CysN/NodQ subfamily.</text>
</comment>
<feature type="chain" id="PRO_1000092162" description="Sulfate adenylyltransferase subunit 1">
    <location>
        <begin position="1"/>
        <end position="476"/>
    </location>
</feature>
<feature type="domain" description="tr-type G">
    <location>
        <begin position="24"/>
        <end position="240"/>
    </location>
</feature>
<feature type="region of interest" description="G1" evidence="1">
    <location>
        <begin position="33"/>
        <end position="40"/>
    </location>
</feature>
<feature type="region of interest" description="G2" evidence="1">
    <location>
        <begin position="91"/>
        <end position="95"/>
    </location>
</feature>
<feature type="region of interest" description="G3" evidence="1">
    <location>
        <begin position="112"/>
        <end position="115"/>
    </location>
</feature>
<feature type="region of interest" description="G4" evidence="1">
    <location>
        <begin position="167"/>
        <end position="170"/>
    </location>
</feature>
<feature type="region of interest" description="G5" evidence="1">
    <location>
        <begin position="205"/>
        <end position="207"/>
    </location>
</feature>
<feature type="binding site" evidence="2">
    <location>
        <begin position="33"/>
        <end position="40"/>
    </location>
    <ligand>
        <name>GTP</name>
        <dbReference type="ChEBI" id="CHEBI:37565"/>
    </ligand>
</feature>
<feature type="binding site" evidence="2">
    <location>
        <begin position="112"/>
        <end position="116"/>
    </location>
    <ligand>
        <name>GTP</name>
        <dbReference type="ChEBI" id="CHEBI:37565"/>
    </ligand>
</feature>
<feature type="binding site" evidence="2">
    <location>
        <begin position="167"/>
        <end position="170"/>
    </location>
    <ligand>
        <name>GTP</name>
        <dbReference type="ChEBI" id="CHEBI:37565"/>
    </ligand>
</feature>
<feature type="sequence conflict" description="In Ref. 2; ACP10657." evidence="3" ref="2">
    <original>T</original>
    <variation>N</variation>
    <location>
        <position position="197"/>
    </location>
</feature>
<sequence>MNNAVKEQLAELGIEGYLNQHQHKSLLRFLTCGSVDDGKSTLIGRLLHDSKQIYEDQLAAVHNDSQRVGTTGSRPDLALLVDGLQAEREQGITIDVAYRYFSTQKRKFIIADTPGHEQYTRNMATGASTCDLAVILIDARKGVLDQTRRHSFISNLLGLKHFIVAVNKMDLVDYSQDRFEQIRAEYLEFSKHLQGETEIQIIPLSALEGDNVVEKSRLMDWYQGPSLLELLENVDIDRDKSSGAFRFPVQYVNRPNLDFRGFAGTIASGVVKVGDKIKALPSGKTSTVTRIVTFDGDLPQAQAGLAVTLTLADEIDISRGDLIVLESAQVDSTNHLLADVVWMTEQPLQVGRDYDIKIAGKKTVGQVKAVRHQYDINNLSTYHAESLPLNGIGLCEWTFTQTVALDKYLDCADTGGFIIIDRLTNVTVGAGLVRDSLQNITGQTESFSAFELELNALVRKHFPHWQAIDLSRLGKA</sequence>
<name>CYSN_VIBC3</name>
<keyword id="KW-0067">ATP-binding</keyword>
<keyword id="KW-0342">GTP-binding</keyword>
<keyword id="KW-0547">Nucleotide-binding</keyword>
<keyword id="KW-0548">Nucleotidyltransferase</keyword>
<keyword id="KW-0808">Transferase</keyword>
<gene>
    <name evidence="2" type="primary">cysN</name>
    <name type="ordered locus">VC0395_A2136</name>
    <name type="ordered locus">VC395_2671</name>
</gene>
<organism>
    <name type="scientific">Vibrio cholerae serotype O1 (strain ATCC 39541 / Classical Ogawa 395 / O395)</name>
    <dbReference type="NCBI Taxonomy" id="345073"/>
    <lineage>
        <taxon>Bacteria</taxon>
        <taxon>Pseudomonadati</taxon>
        <taxon>Pseudomonadota</taxon>
        <taxon>Gammaproteobacteria</taxon>
        <taxon>Vibrionales</taxon>
        <taxon>Vibrionaceae</taxon>
        <taxon>Vibrio</taxon>
    </lineage>
</organism>
<proteinExistence type="inferred from homology"/>
<accession>A5F578</accession>
<accession>C3LXF7</accession>
<reference key="1">
    <citation type="submission" date="2007-03" db="EMBL/GenBank/DDBJ databases">
        <authorList>
            <person name="Heidelberg J."/>
        </authorList>
    </citation>
    <scope>NUCLEOTIDE SEQUENCE [LARGE SCALE GENOMIC DNA]</scope>
    <source>
        <strain>ATCC 39541 / Classical Ogawa 395 / O395</strain>
    </source>
</reference>
<reference key="2">
    <citation type="journal article" date="2008" name="PLoS ONE">
        <title>A recalibrated molecular clock and independent origins for the cholera pandemic clones.</title>
        <authorList>
            <person name="Feng L."/>
            <person name="Reeves P.R."/>
            <person name="Lan R."/>
            <person name="Ren Y."/>
            <person name="Gao C."/>
            <person name="Zhou Z."/>
            <person name="Ren Y."/>
            <person name="Cheng J."/>
            <person name="Wang W."/>
            <person name="Wang J."/>
            <person name="Qian W."/>
            <person name="Li D."/>
            <person name="Wang L."/>
        </authorList>
    </citation>
    <scope>NUCLEOTIDE SEQUENCE [LARGE SCALE GENOMIC DNA]</scope>
    <source>
        <strain>ATCC 39541 / Classical Ogawa 395 / O395</strain>
    </source>
</reference>
<evidence type="ECO:0000250" key="1"/>
<evidence type="ECO:0000255" key="2">
    <source>
        <dbReference type="HAMAP-Rule" id="MF_00062"/>
    </source>
</evidence>
<evidence type="ECO:0000305" key="3"/>
<protein>
    <recommendedName>
        <fullName evidence="2">Sulfate adenylyltransferase subunit 1</fullName>
        <ecNumber evidence="2">2.7.7.4</ecNumber>
    </recommendedName>
    <alternativeName>
        <fullName evidence="2">ATP-sulfurylase large subunit</fullName>
    </alternativeName>
    <alternativeName>
        <fullName evidence="2">Sulfate adenylate transferase</fullName>
        <shortName evidence="2">SAT</shortName>
    </alternativeName>
</protein>